<keyword id="KW-1003">Cell membrane</keyword>
<keyword id="KW-1015">Disulfide bond</keyword>
<keyword id="KW-0325">Glycoprotein</keyword>
<keyword id="KW-0336">GPI-anchor</keyword>
<keyword id="KW-0446">Lipid-binding</keyword>
<keyword id="KW-0449">Lipoprotein</keyword>
<keyword id="KW-0472">Membrane</keyword>
<keyword id="KW-1185">Reference proteome</keyword>
<keyword id="KW-0732">Signal</keyword>
<keyword id="KW-0813">Transport</keyword>
<evidence type="ECO:0000250" key="1">
    <source>
        <dbReference type="UniProtKB" id="A0A0B4JDK1"/>
    </source>
</evidence>
<evidence type="ECO:0000255" key="2"/>
<evidence type="ECO:0000255" key="3">
    <source>
        <dbReference type="PROSITE-ProRule" id="PRU00498"/>
    </source>
</evidence>
<evidence type="ECO:0000269" key="4">
    <source>
    </source>
</evidence>
<evidence type="ECO:0000269" key="5">
    <source>
    </source>
</evidence>
<evidence type="ECO:0000303" key="6">
    <source>
    </source>
</evidence>
<evidence type="ECO:0000303" key="7">
    <source>
    </source>
</evidence>
<evidence type="ECO:0000305" key="8"/>
<evidence type="ECO:0000312" key="9">
    <source>
        <dbReference type="Araport" id="AT5G13900"/>
    </source>
</evidence>
<evidence type="ECO:0000312" key="10">
    <source>
        <dbReference type="EMBL" id="BAB11118.1"/>
    </source>
</evidence>
<protein>
    <recommendedName>
        <fullName evidence="7">Non-specific lipid transfer protein GPI-anchored 30</fullName>
        <shortName evidence="7">AtLTPG-30</shortName>
        <shortName evidence="7">Protein LTP-GPI-ANCHORED 30</shortName>
    </recommendedName>
    <alternativeName>
        <fullName evidence="6">Lipid transfer-like protein VAS</fullName>
    </alternativeName>
</protein>
<reference key="1">
    <citation type="journal article" date="2002" name="Plant J.">
        <title>Activation tagging of the two closely linked genes LEP and VAS independently affects vascular cell number.</title>
        <authorList>
            <person name="van der Graaff E."/>
            <person name="Hooykaas P.J.J."/>
            <person name="Keller B."/>
        </authorList>
    </citation>
    <scope>NUCLEOTIDE SEQUENCE [GENOMIC DNA]</scope>
    <scope>FUNCTION</scope>
    <scope>TISSUE SPECIFICITY</scope>
    <source>
        <strain>cv. C24</strain>
    </source>
</reference>
<reference key="2">
    <citation type="journal article" date="1997" name="DNA Res.">
        <title>Structural analysis of Arabidopsis thaliana chromosome 5. I. Sequence features of the 1.6 Mb regions covered by twenty physically assigned P1 clones.</title>
        <authorList>
            <person name="Sato S."/>
            <person name="Kotani H."/>
            <person name="Nakamura Y."/>
            <person name="Kaneko T."/>
            <person name="Asamizu E."/>
            <person name="Fukami M."/>
            <person name="Miyajima N."/>
            <person name="Tabata S."/>
        </authorList>
    </citation>
    <scope>NUCLEOTIDE SEQUENCE [LARGE SCALE GENOMIC DNA]</scope>
    <source>
        <strain>cv. Columbia</strain>
    </source>
</reference>
<reference key="3">
    <citation type="journal article" date="2017" name="Plant J.">
        <title>Araport11: a complete reannotation of the Arabidopsis thaliana reference genome.</title>
        <authorList>
            <person name="Cheng C.Y."/>
            <person name="Krishnakumar V."/>
            <person name="Chan A.P."/>
            <person name="Thibaud-Nissen F."/>
            <person name="Schobel S."/>
            <person name="Town C.D."/>
        </authorList>
    </citation>
    <scope>GENOME REANNOTATION</scope>
    <source>
        <strain>cv. Columbia</strain>
    </source>
</reference>
<reference key="4">
    <citation type="submission" date="2004-07" db="EMBL/GenBank/DDBJ databases">
        <title>Arabidopsis ORF clones.</title>
        <authorList>
            <person name="Cheuk R.F."/>
            <person name="Chen H."/>
            <person name="Kim C.J."/>
            <person name="Shinn P."/>
            <person name="Ecker J.R."/>
        </authorList>
    </citation>
    <scope>NUCLEOTIDE SEQUENCE [LARGE SCALE MRNA]</scope>
    <source>
        <strain>cv. Columbia</strain>
    </source>
</reference>
<reference key="5">
    <citation type="submission" date="2004-09" db="EMBL/GenBank/DDBJ databases">
        <title>Large-scale analysis of RIKEN Arabidopsis full-length (RAFL) cDNAs.</title>
        <authorList>
            <person name="Totoki Y."/>
            <person name="Seki M."/>
            <person name="Ishida J."/>
            <person name="Nakajima M."/>
            <person name="Enju A."/>
            <person name="Kamiya A."/>
            <person name="Narusaka M."/>
            <person name="Shin-i T."/>
            <person name="Nakagawa M."/>
            <person name="Sakamoto N."/>
            <person name="Oishi K."/>
            <person name="Kohara Y."/>
            <person name="Kobayashi M."/>
            <person name="Toyoda A."/>
            <person name="Sakaki Y."/>
            <person name="Sakurai T."/>
            <person name="Iida K."/>
            <person name="Akiyama K."/>
            <person name="Satou M."/>
            <person name="Toyoda T."/>
            <person name="Konagaya A."/>
            <person name="Carninci P."/>
            <person name="Kawai J."/>
            <person name="Hayashizaki Y."/>
            <person name="Shinozaki K."/>
        </authorList>
    </citation>
    <scope>NUCLEOTIDE SEQUENCE [LARGE SCALE MRNA]</scope>
    <source>
        <strain>cv. Columbia</strain>
    </source>
</reference>
<reference key="6">
    <citation type="journal article" date="2013" name="Plant Mol. Biol.">
        <title>Coexpression patterns indicate that GPI-anchored non-specific lipid transfer proteins are involved in accumulation of cuticular wax, suberin and sporopollenin.</title>
        <authorList>
            <person name="Edstam M.M."/>
            <person name="Blomqvist K."/>
            <person name="Ekloef A."/>
            <person name="Wennergren U."/>
            <person name="Edqvist J."/>
        </authorList>
    </citation>
    <scope>TISSUE SPECIFICITY</scope>
    <scope>GENE FAMILY</scope>
    <scope>NOMENCLATURE</scope>
    <source>
        <strain>cv. Columbia</strain>
    </source>
</reference>
<organism>
    <name type="scientific">Arabidopsis thaliana</name>
    <name type="common">Mouse-ear cress</name>
    <dbReference type="NCBI Taxonomy" id="3702"/>
    <lineage>
        <taxon>Eukaryota</taxon>
        <taxon>Viridiplantae</taxon>
        <taxon>Streptophyta</taxon>
        <taxon>Embryophyta</taxon>
        <taxon>Tracheophyta</taxon>
        <taxon>Spermatophyta</taxon>
        <taxon>Magnoliopsida</taxon>
        <taxon>eudicotyledons</taxon>
        <taxon>Gunneridae</taxon>
        <taxon>Pentapetalae</taxon>
        <taxon>rosids</taxon>
        <taxon>malvids</taxon>
        <taxon>Brassicales</taxon>
        <taxon>Brassicaceae</taxon>
        <taxon>Camelineae</taxon>
        <taxon>Arabidopsis</taxon>
    </lineage>
</organism>
<accession>Q9FFY3</accession>
<proteinExistence type="evidence at transcript level"/>
<dbReference type="EMBL" id="AF463514">
    <property type="protein sequence ID" value="AAL68835.1"/>
    <property type="molecule type" value="Genomic_DNA"/>
</dbReference>
<dbReference type="EMBL" id="AB005230">
    <property type="protein sequence ID" value="BAB11118.1"/>
    <property type="molecule type" value="Genomic_DNA"/>
</dbReference>
<dbReference type="EMBL" id="CP002688">
    <property type="protein sequence ID" value="AED91957.1"/>
    <property type="molecule type" value="Genomic_DNA"/>
</dbReference>
<dbReference type="EMBL" id="BT015106">
    <property type="protein sequence ID" value="AAT71978.1"/>
    <property type="molecule type" value="mRNA"/>
</dbReference>
<dbReference type="EMBL" id="AK175242">
    <property type="protein sequence ID" value="BAD43005.1"/>
    <property type="molecule type" value="mRNA"/>
</dbReference>
<dbReference type="RefSeq" id="NP_196894.1">
    <property type="nucleotide sequence ID" value="NM_121393.4"/>
</dbReference>
<dbReference type="SMR" id="Q9FFY3"/>
<dbReference type="STRING" id="3702.Q9FFY3"/>
<dbReference type="GlyCosmos" id="Q9FFY3">
    <property type="glycosylation" value="1 site, No reported glycans"/>
</dbReference>
<dbReference type="GlyGen" id="Q9FFY3">
    <property type="glycosylation" value="1 site"/>
</dbReference>
<dbReference type="PaxDb" id="3702-AT5G13900.1"/>
<dbReference type="ProteomicsDB" id="243260"/>
<dbReference type="EnsemblPlants" id="AT5G13900.1">
    <property type="protein sequence ID" value="AT5G13900.1"/>
    <property type="gene ID" value="AT5G13900"/>
</dbReference>
<dbReference type="GeneID" id="831237"/>
<dbReference type="Gramene" id="AT5G13900.1">
    <property type="protein sequence ID" value="AT5G13900.1"/>
    <property type="gene ID" value="AT5G13900"/>
</dbReference>
<dbReference type="KEGG" id="ath:AT5G13900"/>
<dbReference type="Araport" id="AT5G13900"/>
<dbReference type="TAIR" id="AT5G13900">
    <property type="gene designation" value="LTPG30"/>
</dbReference>
<dbReference type="eggNOG" id="ENOG502S410">
    <property type="taxonomic scope" value="Eukaryota"/>
</dbReference>
<dbReference type="HOGENOM" id="CLU_116928_2_0_1"/>
<dbReference type="InParanoid" id="Q9FFY3"/>
<dbReference type="OMA" id="DTSCINQ"/>
<dbReference type="PhylomeDB" id="Q9FFY3"/>
<dbReference type="PRO" id="PR:Q9FFY3"/>
<dbReference type="Proteomes" id="UP000006548">
    <property type="component" value="Chromosome 5"/>
</dbReference>
<dbReference type="ExpressionAtlas" id="Q9FFY3">
    <property type="expression patterns" value="baseline and differential"/>
</dbReference>
<dbReference type="GO" id="GO:0005886">
    <property type="term" value="C:plasma membrane"/>
    <property type="evidence" value="ECO:0007669"/>
    <property type="project" value="UniProtKB-SubCell"/>
</dbReference>
<dbReference type="GO" id="GO:0098552">
    <property type="term" value="C:side of membrane"/>
    <property type="evidence" value="ECO:0007669"/>
    <property type="project" value="UniProtKB-KW"/>
</dbReference>
<dbReference type="GO" id="GO:0008289">
    <property type="term" value="F:lipid binding"/>
    <property type="evidence" value="ECO:0007669"/>
    <property type="project" value="UniProtKB-KW"/>
</dbReference>
<dbReference type="CDD" id="cd00010">
    <property type="entry name" value="AAI_LTSS"/>
    <property type="match status" value="1"/>
</dbReference>
<dbReference type="FunFam" id="1.10.110.10:FF:000011">
    <property type="entry name" value="Lipid transfer-like protein VAS"/>
    <property type="match status" value="1"/>
</dbReference>
<dbReference type="Gene3D" id="1.10.110.10">
    <property type="entry name" value="Plant lipid-transfer and hydrophobic proteins"/>
    <property type="match status" value="1"/>
</dbReference>
<dbReference type="InterPro" id="IPR036312">
    <property type="entry name" value="Bifun_inhib/LTP/seed_sf"/>
</dbReference>
<dbReference type="InterPro" id="IPR016140">
    <property type="entry name" value="Bifunc_inhib/LTP/seed_store"/>
</dbReference>
<dbReference type="InterPro" id="IPR043325">
    <property type="entry name" value="LTSS"/>
</dbReference>
<dbReference type="PANTHER" id="PTHR33044">
    <property type="entry name" value="BIFUNCTIONAL INHIBITOR/LIPID-TRANSFER PROTEIN/SEED STORAGE 2S ALBUMIN SUPERFAMILY PROTEIN-RELATED"/>
    <property type="match status" value="1"/>
</dbReference>
<dbReference type="Pfam" id="PF14368">
    <property type="entry name" value="LTP_2"/>
    <property type="match status" value="1"/>
</dbReference>
<dbReference type="SUPFAM" id="SSF47699">
    <property type="entry name" value="Bifunctional inhibitor/lipid-transfer protein/seed storage 2S albumin"/>
    <property type="match status" value="1"/>
</dbReference>
<gene>
    <name evidence="7" type="primary">LTPG30</name>
    <name evidence="6" type="synonym">VAS</name>
    <name evidence="9" type="ordered locus">At5g13900</name>
    <name evidence="10" type="ORF">MAC12.14</name>
</gene>
<comment type="function">
    <text evidence="4">Lipid transfer protein that promotes the number of phloem (pro)cambial and pericycle cells.</text>
</comment>
<comment type="subcellular location">
    <subcellularLocation>
        <location evidence="2">Cell membrane</location>
        <topology evidence="2">Lipid-anchor</topology>
        <topology evidence="2">GPI-anchor</topology>
    </subcellularLocation>
</comment>
<comment type="tissue specificity">
    <text evidence="4 5">Expressed in vascular tissues of all organs (PubMed:12472696). Expressed in seedlings, preferentially in hypocotyls and roots (PubMed:23893219). Also observed in siliques (PubMed:23893219).</text>
</comment>
<comment type="similarity">
    <text evidence="8">Belongs to the plant LTP family.</text>
</comment>
<feature type="signal peptide" evidence="2">
    <location>
        <begin position="1"/>
        <end position="22"/>
    </location>
</feature>
<feature type="chain" id="PRO_0000297962" description="Non-specific lipid transfer protein GPI-anchored 30">
    <location>
        <begin position="23"/>
        <end position="151"/>
    </location>
</feature>
<feature type="propeptide" id="PRO_0000451634" description="Removed in mature form" evidence="2">
    <location>
        <begin position="121"/>
        <end position="151"/>
    </location>
</feature>
<feature type="lipid moiety-binding region" description="GPI-anchor amidated serine" evidence="2">
    <location>
        <position position="120"/>
    </location>
</feature>
<feature type="glycosylation site" description="N-linked (GlcNAc...) asparagine" evidence="3">
    <location>
        <position position="44"/>
    </location>
</feature>
<feature type="disulfide bond" evidence="1">
    <location>
        <begin position="32"/>
        <end position="69"/>
    </location>
</feature>
<feature type="disulfide bond" evidence="1">
    <location>
        <begin position="39"/>
        <end position="53"/>
    </location>
</feature>
<feature type="disulfide bond" evidence="1">
    <location>
        <begin position="54"/>
        <end position="97"/>
    </location>
</feature>
<feature type="disulfide bond" evidence="1">
    <location>
        <begin position="67"/>
        <end position="106"/>
    </location>
</feature>
<name>LTG30_ARATH</name>
<sequence length="151" mass="16532">MMMGMKFFSFYVVLLLVAASSGMRINGQSVSCLNQLAPCLNYLNGTKEVPQVCCNPLKSVIRNNPECLCRMISNRWSSQAERAGIDVNDAQMLPARCGEHVNPIACLTRSRGGSTNSDRSSSIGNTFSQSYWMTTLAIAATVLSYCHHIIS</sequence>